<gene>
    <name type="primary">NRG3</name>
</gene>
<feature type="chain" id="PRO_0000019481" description="Pro-neuregulin-3, membrane-bound isoform">
    <location>
        <begin position="1"/>
        <end position="720"/>
    </location>
</feature>
<feature type="chain" id="PRO_0000019482" description="Neuregulin-3">
    <location>
        <begin position="1"/>
        <end position="359"/>
    </location>
</feature>
<feature type="topological domain" description="Extracellular" evidence="2">
    <location>
        <begin position="1"/>
        <end position="360"/>
    </location>
</feature>
<feature type="transmembrane region" description="Helical; Note=Internal signal sequence" evidence="2">
    <location>
        <begin position="361"/>
        <end position="381"/>
    </location>
</feature>
<feature type="topological domain" description="Cytoplasmic" evidence="2">
    <location>
        <begin position="382"/>
        <end position="720"/>
    </location>
</feature>
<feature type="domain" description="EGF-like" evidence="3">
    <location>
        <begin position="286"/>
        <end position="329"/>
    </location>
</feature>
<feature type="region of interest" description="Disordered" evidence="4">
    <location>
        <begin position="28"/>
        <end position="48"/>
    </location>
</feature>
<feature type="region of interest" description="Disordered" evidence="4">
    <location>
        <begin position="119"/>
        <end position="223"/>
    </location>
</feature>
<feature type="region of interest" description="Disordered" evidence="4">
    <location>
        <begin position="246"/>
        <end position="280"/>
    </location>
</feature>
<feature type="region of interest" description="Disordered" evidence="4">
    <location>
        <begin position="451"/>
        <end position="481"/>
    </location>
</feature>
<feature type="compositionally biased region" description="Gly residues" evidence="4">
    <location>
        <begin position="34"/>
        <end position="44"/>
    </location>
</feature>
<feature type="compositionally biased region" description="Low complexity" evidence="4">
    <location>
        <begin position="127"/>
        <end position="148"/>
    </location>
</feature>
<feature type="compositionally biased region" description="Polar residues" evidence="4">
    <location>
        <begin position="149"/>
        <end position="163"/>
    </location>
</feature>
<feature type="compositionally biased region" description="Low complexity" evidence="4">
    <location>
        <begin position="187"/>
        <end position="205"/>
    </location>
</feature>
<feature type="compositionally biased region" description="Low complexity" evidence="4">
    <location>
        <begin position="250"/>
        <end position="271"/>
    </location>
</feature>
<feature type="disulfide bond" evidence="3">
    <location>
        <begin position="290"/>
        <end position="304"/>
    </location>
</feature>
<feature type="disulfide bond" evidence="3">
    <location>
        <begin position="298"/>
        <end position="317"/>
    </location>
</feature>
<feature type="disulfide bond" evidence="3">
    <location>
        <begin position="319"/>
        <end position="328"/>
    </location>
</feature>
<feature type="splice variant" id="VSP_021828" description="In isoform 3." evidence="8">
    <location>
        <begin position="1"/>
        <end position="221"/>
    </location>
</feature>
<feature type="splice variant" id="VSP_021829" description="In isoform 3." evidence="8">
    <original>PSWPTAAYATSSYLHDSTPSWTLSPFQDAASSSSSSSSSATTTTPETSTSPKFH</original>
    <variation>MECGIPPTLVCVGRGGGLHTINIIIWYYFPSAWRTCFNISSSVGLLLTNSYKFY</variation>
    <location>
        <begin position="222"/>
        <end position="275"/>
    </location>
</feature>
<feature type="splice variant" id="VSP_021830" description="In isoform 2." evidence="10">
    <location>
        <begin position="471"/>
        <end position="477"/>
    </location>
</feature>
<feature type="splice variant" id="VSP_035752" description="In isoform 4." evidence="9">
    <location>
        <begin position="529"/>
        <end position="552"/>
    </location>
</feature>
<feature type="sequence variant" id="VAR_047386" description="In dbSNP:rs2295934.">
    <original>S</original>
    <variation>R</variation>
    <location>
        <position position="472"/>
    </location>
</feature>
<feature type="sequence variant" id="VAR_047387" description="In dbSNP:rs17101193.">
    <original>K</original>
    <variation>N</variation>
    <location>
        <position position="552"/>
    </location>
</feature>
<comment type="function">
    <text evidence="6 7">Direct ligand for the ERBB4 tyrosine kinase receptor. Binding results in ligand-stimulated tyrosine phosphorylation and activation of the receptor. Does not bind to the EGF receptor, ERBB2 or ERBB3 receptors. May be a survival factor for oligodendrocytes.</text>
</comment>
<comment type="subunit">
    <text evidence="5">Interacts with ERBB4.</text>
</comment>
<comment type="subcellular location">
    <molecule>Pro-neuregulin-3, membrane-bound isoform</molecule>
    <subcellularLocation>
        <location evidence="1">Cell membrane</location>
        <topology evidence="1">Single-pass type I membrane protein</topology>
    </subcellularLocation>
    <text evidence="1">Does not seem to be active.</text>
</comment>
<comment type="subcellular location">
    <molecule>Neuregulin-3</molecule>
    <subcellularLocation>
        <location evidence="1">Secreted</location>
    </subcellularLocation>
</comment>
<comment type="subcellular location">
    <molecule>Isoform 3</molecule>
    <subcellularLocation>
        <location>Cell membrane</location>
        <topology>Single-pass type I membrane protein</topology>
    </subcellularLocation>
    <text>Isoform 3 is also proteolytically released as a soluble form.</text>
</comment>
<comment type="alternative products">
    <event type="alternative splicing"/>
    <isoform>
        <id>P56975-1</id>
        <name>1</name>
        <sequence type="displayed"/>
    </isoform>
    <isoform>
        <id>P56975-2</id>
        <name>2</name>
        <sequence type="described" ref="VSP_021830"/>
    </isoform>
    <isoform>
        <id>P56975-3</id>
        <name>3</name>
        <name>FBNRG3</name>
        <sequence type="described" ref="VSP_021828 VSP_021829"/>
    </isoform>
    <isoform>
        <id>P56975-4</id>
        <name>4</name>
        <sequence type="described" ref="VSP_035752"/>
    </isoform>
</comment>
<comment type="tissue specificity">
    <text>Highly expressed in most regions of the brain with the exception of corpus callosum. Expressed at lower level in testis. Not detected in heart, placenta, lung, liver, skeletal muscle, kidney, pancreas, spleen, thymus, prostate, ovary, small intestine, colon and peripheral blood leukocytes.</text>
</comment>
<comment type="developmental stage">
    <text evidence="6">Isoform 3 is expressed in fetal brain but not in other fetal tissues.</text>
</comment>
<comment type="domain">
    <text evidence="1">The cytoplasmic domain may be involved in the regulation of trafficking and proteolytic processing. Regulation of the proteolytic processing involves initial intracellular domain dimerization (By similarity).</text>
</comment>
<comment type="domain">
    <text evidence="1">ERBB receptor binding is elicited entirely by the EGF-like domain.</text>
</comment>
<comment type="PTM">
    <text>Proteolytic cleavage close to the plasma membrane on the external face leads to the release of the soluble growth factor form.</text>
</comment>
<comment type="PTM">
    <text evidence="1 6">Extensive glycosylation precedes the proteolytic cleavage (By similarity). Isoform 3 is glycosylated.</text>
</comment>
<comment type="similarity">
    <text evidence="10">Belongs to the neuregulin family.</text>
</comment>
<name>NRG3_HUMAN</name>
<organism>
    <name type="scientific">Homo sapiens</name>
    <name type="common">Human</name>
    <dbReference type="NCBI Taxonomy" id="9606"/>
    <lineage>
        <taxon>Eukaryota</taxon>
        <taxon>Metazoa</taxon>
        <taxon>Chordata</taxon>
        <taxon>Craniata</taxon>
        <taxon>Vertebrata</taxon>
        <taxon>Euteleostomi</taxon>
        <taxon>Mammalia</taxon>
        <taxon>Eutheria</taxon>
        <taxon>Euarchontoglires</taxon>
        <taxon>Primates</taxon>
        <taxon>Haplorrhini</taxon>
        <taxon>Catarrhini</taxon>
        <taxon>Hominidae</taxon>
        <taxon>Homo</taxon>
    </lineage>
</organism>
<proteinExistence type="evidence at protein level"/>
<protein>
    <recommendedName>
        <fullName>Pro-neuregulin-3, membrane-bound isoform</fullName>
        <shortName>Pro-NRG3</shortName>
    </recommendedName>
    <component>
        <recommendedName>
            <fullName>Neuregulin-3</fullName>
            <shortName>NRG-3</shortName>
        </recommendedName>
    </component>
</protein>
<keyword id="KW-0025">Alternative splicing</keyword>
<keyword id="KW-1003">Cell membrane</keyword>
<keyword id="KW-1015">Disulfide bond</keyword>
<keyword id="KW-0245">EGF-like domain</keyword>
<keyword id="KW-0325">Glycoprotein</keyword>
<keyword id="KW-0339">Growth factor</keyword>
<keyword id="KW-0472">Membrane</keyword>
<keyword id="KW-1267">Proteomics identification</keyword>
<keyword id="KW-1185">Reference proteome</keyword>
<keyword id="KW-0964">Secreted</keyword>
<keyword id="KW-0812">Transmembrane</keyword>
<keyword id="KW-1133">Transmembrane helix</keyword>
<dbReference type="EMBL" id="DQ857894">
    <property type="protein sequence ID" value="ABG77979.1"/>
    <property type="molecule type" value="mRNA"/>
</dbReference>
<dbReference type="EMBL" id="DQ001411">
    <property type="protein sequence ID" value="AAY17216.1"/>
    <property type="molecule type" value="mRNA"/>
</dbReference>
<dbReference type="EMBL" id="AL096706">
    <property type="status" value="NOT_ANNOTATED_CDS"/>
    <property type="molecule type" value="Genomic_DNA"/>
</dbReference>
<dbReference type="EMBL" id="AL136085">
    <property type="status" value="NOT_ANNOTATED_CDS"/>
    <property type="molecule type" value="Genomic_DNA"/>
</dbReference>
<dbReference type="EMBL" id="AL354749">
    <property type="status" value="NOT_ANNOTATED_CDS"/>
    <property type="molecule type" value="Genomic_DNA"/>
</dbReference>
<dbReference type="EMBL" id="AL391478">
    <property type="status" value="NOT_ANNOTATED_CDS"/>
    <property type="molecule type" value="Genomic_DNA"/>
</dbReference>
<dbReference type="EMBL" id="AL513204">
    <property type="status" value="NOT_ANNOTATED_CDS"/>
    <property type="molecule type" value="Genomic_DNA"/>
</dbReference>
<dbReference type="EMBL" id="AL589782">
    <property type="status" value="NOT_ANNOTATED_CDS"/>
    <property type="molecule type" value="Genomic_DNA"/>
</dbReference>
<dbReference type="CCDS" id="CCDS31233.1">
    <molecule id="P56975-4"/>
</dbReference>
<dbReference type="CCDS" id="CCDS53547.1">
    <molecule id="P56975-3"/>
</dbReference>
<dbReference type="CCDS" id="CCDS91287.1">
    <molecule id="P56975-1"/>
</dbReference>
<dbReference type="RefSeq" id="NP_001010848.2">
    <molecule id="P56975-4"/>
    <property type="nucleotide sequence ID" value="NM_001010848.4"/>
</dbReference>
<dbReference type="RefSeq" id="NP_001159445.1">
    <molecule id="P56975-3"/>
    <property type="nucleotide sequence ID" value="NM_001165973.2"/>
</dbReference>
<dbReference type="RefSeq" id="NP_001357013.1">
    <molecule id="P56975-1"/>
    <property type="nucleotide sequence ID" value="NM_001370084.1"/>
</dbReference>
<dbReference type="RefSeq" id="XP_005269501.1">
    <property type="nucleotide sequence ID" value="XM_005269444.4"/>
</dbReference>
<dbReference type="SMR" id="P56975"/>
<dbReference type="BioGRID" id="115944">
    <property type="interactions" value="2"/>
</dbReference>
<dbReference type="FunCoup" id="P56975">
    <property type="interactions" value="155"/>
</dbReference>
<dbReference type="IntAct" id="P56975">
    <property type="interactions" value="1"/>
</dbReference>
<dbReference type="STRING" id="9606.ENSP00000361214"/>
<dbReference type="GlyGen" id="P56975">
    <property type="glycosylation" value="8 sites, 2 O-linked glycans (6 sites)"/>
</dbReference>
<dbReference type="iPTMnet" id="P56975"/>
<dbReference type="PhosphoSitePlus" id="P56975"/>
<dbReference type="BioMuta" id="NRG3"/>
<dbReference type="DMDM" id="9789758"/>
<dbReference type="jPOST" id="P56975"/>
<dbReference type="MassIVE" id="P56975"/>
<dbReference type="PaxDb" id="9606-ENSP00000361214"/>
<dbReference type="PeptideAtlas" id="P56975"/>
<dbReference type="ProteomicsDB" id="56963">
    <molecule id="P56975-1"/>
</dbReference>
<dbReference type="ProteomicsDB" id="56964">
    <molecule id="P56975-2"/>
</dbReference>
<dbReference type="ProteomicsDB" id="56965">
    <molecule id="P56975-3"/>
</dbReference>
<dbReference type="ProteomicsDB" id="56966">
    <molecule id="P56975-4"/>
</dbReference>
<dbReference type="Antibodypedia" id="30013">
    <property type="antibodies" value="225 antibodies from 35 providers"/>
</dbReference>
<dbReference type="DNASU" id="10718"/>
<dbReference type="Ensembl" id="ENST00000372141.7">
    <molecule id="P56975-4"/>
    <property type="protein sequence ID" value="ENSP00000361214.2"/>
    <property type="gene ID" value="ENSG00000185737.13"/>
</dbReference>
<dbReference type="Ensembl" id="ENST00000372142.6">
    <molecule id="P56975-3"/>
    <property type="protein sequence ID" value="ENSP00000361215.2"/>
    <property type="gene ID" value="ENSG00000185737.13"/>
</dbReference>
<dbReference type="Ensembl" id="ENST00000404547.5">
    <molecule id="P56975-1"/>
    <property type="protein sequence ID" value="ENSP00000384796.1"/>
    <property type="gene ID" value="ENSG00000185737.13"/>
</dbReference>
<dbReference type="GeneID" id="10718"/>
<dbReference type="KEGG" id="hsa:10718"/>
<dbReference type="MANE-Select" id="ENST00000372141.7">
    <molecule id="P56975-4"/>
    <property type="protein sequence ID" value="ENSP00000361214.2"/>
    <property type="RefSeq nucleotide sequence ID" value="NM_001010848.4"/>
    <property type="RefSeq protein sequence ID" value="NP_001010848.2"/>
</dbReference>
<dbReference type="UCSC" id="uc001kco.3">
    <molecule id="P56975-1"/>
    <property type="organism name" value="human"/>
</dbReference>
<dbReference type="AGR" id="HGNC:7999"/>
<dbReference type="CTD" id="10718"/>
<dbReference type="DisGeNET" id="10718"/>
<dbReference type="GeneCards" id="NRG3"/>
<dbReference type="HGNC" id="HGNC:7999">
    <property type="gene designation" value="NRG3"/>
</dbReference>
<dbReference type="HPA" id="ENSG00000185737">
    <property type="expression patterns" value="Tissue enhanced (brain)"/>
</dbReference>
<dbReference type="MIM" id="605533">
    <property type="type" value="gene"/>
</dbReference>
<dbReference type="neXtProt" id="NX_P56975"/>
<dbReference type="OpenTargets" id="ENSG00000185737"/>
<dbReference type="PharmGKB" id="PA31778"/>
<dbReference type="VEuPathDB" id="HostDB:ENSG00000185737"/>
<dbReference type="eggNOG" id="ENOG502QS97">
    <property type="taxonomic scope" value="Eukaryota"/>
</dbReference>
<dbReference type="GeneTree" id="ENSGT00940000156754"/>
<dbReference type="HOGENOM" id="CLU_395836_0_0_1"/>
<dbReference type="InParanoid" id="P56975"/>
<dbReference type="OMA" id="CHHDNEV"/>
<dbReference type="OrthoDB" id="9939684at2759"/>
<dbReference type="PAN-GO" id="P56975">
    <property type="GO annotations" value="4 GO annotations based on evolutionary models"/>
</dbReference>
<dbReference type="PhylomeDB" id="P56975"/>
<dbReference type="TreeFam" id="TF336537"/>
<dbReference type="PathwayCommons" id="P56975"/>
<dbReference type="Reactome" id="R-HSA-1227986">
    <property type="pathway name" value="Signaling by ERBB2"/>
</dbReference>
<dbReference type="Reactome" id="R-HSA-1236394">
    <property type="pathway name" value="Signaling by ERBB4"/>
</dbReference>
<dbReference type="Reactome" id="R-HSA-1250196">
    <property type="pathway name" value="SHC1 events in ERBB2 signaling"/>
</dbReference>
<dbReference type="Reactome" id="R-HSA-1250342">
    <property type="pathway name" value="PI3K events in ERBB4 signaling"/>
</dbReference>
<dbReference type="Reactome" id="R-HSA-1250347">
    <property type="pathway name" value="SHC1 events in ERBB4 signaling"/>
</dbReference>
<dbReference type="Reactome" id="R-HSA-1251985">
    <property type="pathway name" value="Nuclear signaling by ERBB4"/>
</dbReference>
<dbReference type="Reactome" id="R-HSA-1257604">
    <property type="pathway name" value="PIP3 activates AKT signaling"/>
</dbReference>
<dbReference type="Reactome" id="R-HSA-1963640">
    <property type="pathway name" value="GRB2 events in ERBB2 signaling"/>
</dbReference>
<dbReference type="Reactome" id="R-HSA-1963642">
    <property type="pathway name" value="PI3K events in ERBB2 signaling"/>
</dbReference>
<dbReference type="Reactome" id="R-HSA-2219530">
    <property type="pathway name" value="Constitutive Signaling by Aberrant PI3K in Cancer"/>
</dbReference>
<dbReference type="Reactome" id="R-HSA-5673001">
    <property type="pathway name" value="RAF/MAP kinase cascade"/>
</dbReference>
<dbReference type="Reactome" id="R-HSA-6785631">
    <property type="pathway name" value="ERBB2 Regulates Cell Motility"/>
</dbReference>
<dbReference type="Reactome" id="R-HSA-6811558">
    <property type="pathway name" value="PI5P, PP2A and IER3 Regulate PI3K/AKT Signaling"/>
</dbReference>
<dbReference type="Reactome" id="R-HSA-8847993">
    <property type="pathway name" value="ERBB2 Activates PTK6 Signaling"/>
</dbReference>
<dbReference type="Reactome" id="R-HSA-8863795">
    <property type="pathway name" value="Downregulation of ERBB2 signaling"/>
</dbReference>
<dbReference type="Reactome" id="R-HSA-9664565">
    <property type="pathway name" value="Signaling by ERBB2 KD Mutants"/>
</dbReference>
<dbReference type="Reactome" id="R-HSA-9665686">
    <property type="pathway name" value="Signaling by ERBB2 TMD/JMD mutants"/>
</dbReference>
<dbReference type="SignaLink" id="P56975"/>
<dbReference type="SIGNOR" id="P56975"/>
<dbReference type="BioGRID-ORCS" id="10718">
    <property type="hits" value="14 hits in 1140 CRISPR screens"/>
</dbReference>
<dbReference type="ChiTaRS" id="NRG3">
    <property type="organism name" value="human"/>
</dbReference>
<dbReference type="GeneWiki" id="NRG3"/>
<dbReference type="GenomeRNAi" id="10718"/>
<dbReference type="Pharos" id="P56975">
    <property type="development level" value="Tbio"/>
</dbReference>
<dbReference type="PRO" id="PR:P56975"/>
<dbReference type="Proteomes" id="UP000005640">
    <property type="component" value="Chromosome 10"/>
</dbReference>
<dbReference type="RNAct" id="P56975">
    <property type="molecule type" value="protein"/>
</dbReference>
<dbReference type="Bgee" id="ENSG00000185737">
    <property type="expression patterns" value="Expressed in endothelial cell and 120 other cell types or tissues"/>
</dbReference>
<dbReference type="ExpressionAtlas" id="P56975">
    <property type="expression patterns" value="baseline and differential"/>
</dbReference>
<dbReference type="GO" id="GO:0005576">
    <property type="term" value="C:extracellular region"/>
    <property type="evidence" value="ECO:0000303"/>
    <property type="project" value="UniProtKB"/>
</dbReference>
<dbReference type="GO" id="GO:0005615">
    <property type="term" value="C:extracellular space"/>
    <property type="evidence" value="ECO:0000314"/>
    <property type="project" value="MGI"/>
</dbReference>
<dbReference type="GO" id="GO:0098978">
    <property type="term" value="C:glutamatergic synapse"/>
    <property type="evidence" value="ECO:0000314"/>
    <property type="project" value="SynGO"/>
</dbReference>
<dbReference type="GO" id="GO:0005886">
    <property type="term" value="C:plasma membrane"/>
    <property type="evidence" value="ECO:0000303"/>
    <property type="project" value="UniProtKB"/>
</dbReference>
<dbReference type="GO" id="GO:0045499">
    <property type="term" value="F:chemorepellent activity"/>
    <property type="evidence" value="ECO:0000318"/>
    <property type="project" value="GO_Central"/>
</dbReference>
<dbReference type="GO" id="GO:0008083">
    <property type="term" value="F:growth factor activity"/>
    <property type="evidence" value="ECO:0000303"/>
    <property type="project" value="UniProtKB"/>
</dbReference>
<dbReference type="GO" id="GO:0048018">
    <property type="term" value="F:receptor ligand activity"/>
    <property type="evidence" value="ECO:0000314"/>
    <property type="project" value="MGI"/>
</dbReference>
<dbReference type="GO" id="GO:0030971">
    <property type="term" value="F:receptor tyrosine kinase binding"/>
    <property type="evidence" value="ECO:0000303"/>
    <property type="project" value="UniProtKB"/>
</dbReference>
<dbReference type="GO" id="GO:0030297">
    <property type="term" value="F:transmembrane receptor protein tyrosine kinase activator activity"/>
    <property type="evidence" value="ECO:0000303"/>
    <property type="project" value="UniProtKB"/>
</dbReference>
<dbReference type="GO" id="GO:0021842">
    <property type="term" value="P:chemorepulsion involved in interneuron migration from the subpallium to the cortex"/>
    <property type="evidence" value="ECO:0007669"/>
    <property type="project" value="Ensembl"/>
</dbReference>
<dbReference type="GO" id="GO:0038130">
    <property type="term" value="P:ERBB4 signaling pathway"/>
    <property type="evidence" value="ECO:0000314"/>
    <property type="project" value="MGI"/>
</dbReference>
<dbReference type="GO" id="GO:0038138">
    <property type="term" value="P:ERBB4-ERBB4 signaling pathway"/>
    <property type="evidence" value="ECO:0007669"/>
    <property type="project" value="Ensembl"/>
</dbReference>
<dbReference type="GO" id="GO:0035556">
    <property type="term" value="P:intracellular signal transduction"/>
    <property type="evidence" value="ECO:0000318"/>
    <property type="project" value="GO_Central"/>
</dbReference>
<dbReference type="GO" id="GO:0060596">
    <property type="term" value="P:mammary placode formation"/>
    <property type="evidence" value="ECO:0007669"/>
    <property type="project" value="Ensembl"/>
</dbReference>
<dbReference type="GO" id="GO:0050804">
    <property type="term" value="P:modulation of chemical synaptic transmission"/>
    <property type="evidence" value="ECO:0000314"/>
    <property type="project" value="SynGO"/>
</dbReference>
<dbReference type="GO" id="GO:2001223">
    <property type="term" value="P:negative regulation of neuron migration"/>
    <property type="evidence" value="ECO:0007669"/>
    <property type="project" value="Ensembl"/>
</dbReference>
<dbReference type="GO" id="GO:0007389">
    <property type="term" value="P:pattern specification process"/>
    <property type="evidence" value="ECO:0007669"/>
    <property type="project" value="Ensembl"/>
</dbReference>
<dbReference type="GO" id="GO:0001558">
    <property type="term" value="P:regulation of cell growth"/>
    <property type="evidence" value="ECO:0000303"/>
    <property type="project" value="UniProtKB"/>
</dbReference>
<dbReference type="GO" id="GO:0007416">
    <property type="term" value="P:synapse assembly"/>
    <property type="evidence" value="ECO:0007669"/>
    <property type="project" value="Ensembl"/>
</dbReference>
<dbReference type="FunFam" id="2.10.25.10:FF:000267">
    <property type="entry name" value="pro-neuregulin-3, membrane-bound isoform"/>
    <property type="match status" value="1"/>
</dbReference>
<dbReference type="Gene3D" id="2.10.25.10">
    <property type="entry name" value="Laminin"/>
    <property type="match status" value="1"/>
</dbReference>
<dbReference type="InterPro" id="IPR000742">
    <property type="entry name" value="EGF-like_dom"/>
</dbReference>
<dbReference type="InterPro" id="IPR040180">
    <property type="entry name" value="Neuregulin"/>
</dbReference>
<dbReference type="PANTHER" id="PTHR11100">
    <property type="entry name" value="HEREGULIN-NEUREGULIN FAMILY MEMBER"/>
    <property type="match status" value="1"/>
</dbReference>
<dbReference type="PANTHER" id="PTHR11100:SF18">
    <property type="entry name" value="PRO-NEUREGULIN-3, MEMBRANE-BOUND ISOFORM"/>
    <property type="match status" value="1"/>
</dbReference>
<dbReference type="SUPFAM" id="SSF57196">
    <property type="entry name" value="EGF/Laminin"/>
    <property type="match status" value="1"/>
</dbReference>
<dbReference type="PROSITE" id="PS00022">
    <property type="entry name" value="EGF_1"/>
    <property type="match status" value="1"/>
</dbReference>
<dbReference type="PROSITE" id="PS01186">
    <property type="entry name" value="EGF_2"/>
    <property type="match status" value="1"/>
</dbReference>
<dbReference type="PROSITE" id="PS50026">
    <property type="entry name" value="EGF_3"/>
    <property type="match status" value="1"/>
</dbReference>
<evidence type="ECO:0000250" key="1"/>
<evidence type="ECO:0000255" key="2"/>
<evidence type="ECO:0000255" key="3">
    <source>
        <dbReference type="PROSITE-ProRule" id="PRU00076"/>
    </source>
</evidence>
<evidence type="ECO:0000256" key="4">
    <source>
        <dbReference type="SAM" id="MobiDB-lite"/>
    </source>
</evidence>
<evidence type="ECO:0000269" key="5">
    <source>
    </source>
</evidence>
<evidence type="ECO:0000269" key="6">
    <source>
    </source>
</evidence>
<evidence type="ECO:0000269" key="7">
    <source>
    </source>
</evidence>
<evidence type="ECO:0000303" key="8">
    <source>
    </source>
</evidence>
<evidence type="ECO:0000303" key="9">
    <source ref="3"/>
</evidence>
<evidence type="ECO:0000305" key="10"/>
<sequence>MSEGAAAASPPGAASAAAASAEEGTAAAAAAAAAGGGPDGGGEGAAEPPRELRCSDCIVWNRQQTWLCVVPLFIGFIGLGLSLMLLKWIVVGSVKEYVPTDLVDSKGMGQDPFFLSKPSSFPKAMETTTTTTSTTSPATPSAGGAASSRTPNRISTRLTTITRAPTRFPGHRVPIRASPRSTTARNTAAPATVPSTTAPFFSSSTLGSRPPVPGTPSTQAMPSWPTAAYATSSYLHDSTPSWTLSPFQDAASSSSSSSSSATTTTPETSTSPKFHTTTYSTERSEHFKPCRDKDLAYCLNDGECFVIETLTGSHKHCRCKEGYQGVRCDQFLPKTDSILSDPTDHLGIEFMESEEVYQRQVLSISCIIFGIVIVGMFCAAFYFKSKKQAKQIQEQLKVPQNGKSYSLKASSTMAKSENLVKSHVQLQNYSKVERHPVTALEKMMESSFVGPQSFPEVPSPDRGSQSVKHHRSLSSCCSPGQRSGMLHRNAFRRTPPSPRSRLGGIVGPAYQQLEESRIPDQDTIPCQGIEVRKTISHLPIQLWCVERPLDLKYSSSGLKTQRNTSINMQLPSRETNPYFNSLEQKDLVGYSSTRASSVPIIPSVGLEETCLQMPGISEVKSIKWCKNSYSADVVNVSIPVSDCLIAEQQEVKILLETVQEQIRILTDARRSEDYELASVETEDSASENTAFLPLSPTAKSEREAQFVLRNEIQRDSALTK</sequence>
<accession>P56975</accession>
<accession>A4D7U1</accession>
<accession>Q0PEH2</accession>
<accession>Q5VYH3</accession>
<reference key="1">
    <citation type="journal article" date="1997" name="Proc. Natl. Acad. Sci. U.S.A.">
        <title>Neuregulin-3 (NRG3): a novel neural tissue-enriched protein that binds and activates ErbB4.</title>
        <authorList>
            <person name="Zhang D."/>
            <person name="Sliwkowski M.X."/>
            <person name="Mark M."/>
            <person name="Frantz G."/>
            <person name="Akita R."/>
            <person name="Sun Y."/>
            <person name="Hillan K."/>
            <person name="Crowley C."/>
            <person name="Brush J."/>
            <person name="Godowski P.J."/>
        </authorList>
    </citation>
    <scope>NUCLEOTIDE SEQUENCE [MRNA] (ISOFORM 1)</scope>
    <scope>FUNCTION</scope>
    <source>
        <tissue>Fetal brain</tissue>
    </source>
</reference>
<reference key="2">
    <citation type="journal article" date="2006" name="J. Cell Sci.">
        <title>Characterization of a neural-specific splicing form of the human neuregulin 3 gene involved in oligodendrocyte survival.</title>
        <authorList>
            <person name="Carteron C."/>
            <person name="Ferrer-Montiel A.V."/>
            <person name="Cabedo H."/>
        </authorList>
    </citation>
    <scope>NUCLEOTIDE SEQUENCE [MRNA] (ISOFORM 3)</scope>
    <scope>DEVELOPMENTAL STAGE</scope>
    <scope>SUBCELLULAR LOCATION</scope>
    <scope>GLYCOSYLATION</scope>
    <scope>FUNCTION</scope>
    <source>
        <tissue>Fetal brain</tissue>
    </source>
</reference>
<reference key="3">
    <citation type="submission" date="2005-04" db="EMBL/GenBank/DDBJ databases">
        <title>Bi-directional signalling by NRG-3 cytoplasmic domain.</title>
        <authorList>
            <person name="Tiao J.Y."/>
            <person name="Busfield S.J."/>
        </authorList>
    </citation>
    <scope>NUCLEOTIDE SEQUENCE [MRNA] (ISOFORM 4)</scope>
</reference>
<reference key="4">
    <citation type="journal article" date="2004" name="Nature">
        <title>The DNA sequence and comparative analysis of human chromosome 10.</title>
        <authorList>
            <person name="Deloukas P."/>
            <person name="Earthrowl M.E."/>
            <person name="Grafham D.V."/>
            <person name="Rubenfield M."/>
            <person name="French L."/>
            <person name="Steward C.A."/>
            <person name="Sims S.K."/>
            <person name="Jones M.C."/>
            <person name="Searle S."/>
            <person name="Scott C."/>
            <person name="Howe K."/>
            <person name="Hunt S.E."/>
            <person name="Andrews T.D."/>
            <person name="Gilbert J.G.R."/>
            <person name="Swarbreck D."/>
            <person name="Ashurst J.L."/>
            <person name="Taylor A."/>
            <person name="Battles J."/>
            <person name="Bird C.P."/>
            <person name="Ainscough R."/>
            <person name="Almeida J.P."/>
            <person name="Ashwell R.I.S."/>
            <person name="Ambrose K.D."/>
            <person name="Babbage A.K."/>
            <person name="Bagguley C.L."/>
            <person name="Bailey J."/>
            <person name="Banerjee R."/>
            <person name="Bates K."/>
            <person name="Beasley H."/>
            <person name="Bray-Allen S."/>
            <person name="Brown A.J."/>
            <person name="Brown J.Y."/>
            <person name="Burford D.C."/>
            <person name="Burrill W."/>
            <person name="Burton J."/>
            <person name="Cahill P."/>
            <person name="Camire D."/>
            <person name="Carter N.P."/>
            <person name="Chapman J.C."/>
            <person name="Clark S.Y."/>
            <person name="Clarke G."/>
            <person name="Clee C.M."/>
            <person name="Clegg S."/>
            <person name="Corby N."/>
            <person name="Coulson A."/>
            <person name="Dhami P."/>
            <person name="Dutta I."/>
            <person name="Dunn M."/>
            <person name="Faulkner L."/>
            <person name="Frankish A."/>
            <person name="Frankland J.A."/>
            <person name="Garner P."/>
            <person name="Garnett J."/>
            <person name="Gribble S."/>
            <person name="Griffiths C."/>
            <person name="Grocock R."/>
            <person name="Gustafson E."/>
            <person name="Hammond S."/>
            <person name="Harley J.L."/>
            <person name="Hart E."/>
            <person name="Heath P.D."/>
            <person name="Ho T.P."/>
            <person name="Hopkins B."/>
            <person name="Horne J."/>
            <person name="Howden P.J."/>
            <person name="Huckle E."/>
            <person name="Hynds C."/>
            <person name="Johnson C."/>
            <person name="Johnson D."/>
            <person name="Kana A."/>
            <person name="Kay M."/>
            <person name="Kimberley A.M."/>
            <person name="Kershaw J.K."/>
            <person name="Kokkinaki M."/>
            <person name="Laird G.K."/>
            <person name="Lawlor S."/>
            <person name="Lee H.M."/>
            <person name="Leongamornlert D.A."/>
            <person name="Laird G."/>
            <person name="Lloyd C."/>
            <person name="Lloyd D.M."/>
            <person name="Loveland J."/>
            <person name="Lovell J."/>
            <person name="McLaren S."/>
            <person name="McLay K.E."/>
            <person name="McMurray A."/>
            <person name="Mashreghi-Mohammadi M."/>
            <person name="Matthews L."/>
            <person name="Milne S."/>
            <person name="Nickerson T."/>
            <person name="Nguyen M."/>
            <person name="Overton-Larty E."/>
            <person name="Palmer S.A."/>
            <person name="Pearce A.V."/>
            <person name="Peck A.I."/>
            <person name="Pelan S."/>
            <person name="Phillimore B."/>
            <person name="Porter K."/>
            <person name="Rice C.M."/>
            <person name="Rogosin A."/>
            <person name="Ross M.T."/>
            <person name="Sarafidou T."/>
            <person name="Sehra H.K."/>
            <person name="Shownkeen R."/>
            <person name="Skuce C.D."/>
            <person name="Smith M."/>
            <person name="Standring L."/>
            <person name="Sycamore N."/>
            <person name="Tester J."/>
            <person name="Thorpe A."/>
            <person name="Torcasso W."/>
            <person name="Tracey A."/>
            <person name="Tromans A."/>
            <person name="Tsolas J."/>
            <person name="Wall M."/>
            <person name="Walsh J."/>
            <person name="Wang H."/>
            <person name="Weinstock K."/>
            <person name="West A.P."/>
            <person name="Willey D.L."/>
            <person name="Whitehead S.L."/>
            <person name="Wilming L."/>
            <person name="Wray P.W."/>
            <person name="Young L."/>
            <person name="Chen Y."/>
            <person name="Lovering R.C."/>
            <person name="Moschonas N.K."/>
            <person name="Siebert R."/>
            <person name="Fechtel K."/>
            <person name="Bentley D."/>
            <person name="Durbin R.M."/>
            <person name="Hubbard T."/>
            <person name="Doucette-Stamm L."/>
            <person name="Beck S."/>
            <person name="Smith D.R."/>
            <person name="Rogers J."/>
        </authorList>
    </citation>
    <scope>NUCLEOTIDE SEQUENCE [LARGE SCALE GENOMIC DNA]</scope>
</reference>
<reference key="5">
    <citation type="journal article" date="2000" name="J. Biol. Chem.">
        <title>Ligand discrimination in signaling through an ErbB4 receptor homodimer.</title>
        <authorList>
            <person name="Sweeney C."/>
            <person name="Lai C."/>
            <person name="Riese D.J. II"/>
            <person name="Diamonti A.J."/>
            <person name="Cantley L.C."/>
            <person name="Carraway K.L. III"/>
        </authorList>
    </citation>
    <scope>INTERACTION WITH ERBB4</scope>
</reference>